<proteinExistence type="inferred from homology"/>
<sequence length="185" mass="20902">MVQQIINTAKEKMDKAVQAFTRELATIRAGRANPSLLEKVTVDYYGMPTPIIQLASISVPEARLLVIQPYDKSVIKDIEKAILSSDLGLTPSNDGSVIRITIPPLTEERRRELVKLVKKYSEDAKVAVRNIRRDANDELKKLEKNGEITEDELRGYTDDVQKLTDDHIAKIDAITKEKEKEVMEV</sequence>
<name>RRF_GEOSW</name>
<dbReference type="EMBL" id="CP001638">
    <property type="protein sequence ID" value="ACS24004.1"/>
    <property type="molecule type" value="Genomic_DNA"/>
</dbReference>
<dbReference type="SMR" id="C5D9B8"/>
<dbReference type="STRING" id="471223.GWCH70_1144"/>
<dbReference type="KEGG" id="gwc:GWCH70_1144"/>
<dbReference type="eggNOG" id="COG0233">
    <property type="taxonomic scope" value="Bacteria"/>
</dbReference>
<dbReference type="HOGENOM" id="CLU_073981_2_0_9"/>
<dbReference type="OrthoDB" id="9804006at2"/>
<dbReference type="GO" id="GO:0005737">
    <property type="term" value="C:cytoplasm"/>
    <property type="evidence" value="ECO:0007669"/>
    <property type="project" value="UniProtKB-SubCell"/>
</dbReference>
<dbReference type="GO" id="GO:0043023">
    <property type="term" value="F:ribosomal large subunit binding"/>
    <property type="evidence" value="ECO:0007669"/>
    <property type="project" value="TreeGrafter"/>
</dbReference>
<dbReference type="GO" id="GO:0006415">
    <property type="term" value="P:translational termination"/>
    <property type="evidence" value="ECO:0007669"/>
    <property type="project" value="UniProtKB-UniRule"/>
</dbReference>
<dbReference type="CDD" id="cd00520">
    <property type="entry name" value="RRF"/>
    <property type="match status" value="1"/>
</dbReference>
<dbReference type="FunFam" id="1.10.132.20:FF:000001">
    <property type="entry name" value="Ribosome-recycling factor"/>
    <property type="match status" value="1"/>
</dbReference>
<dbReference type="FunFam" id="3.30.1360.40:FF:000001">
    <property type="entry name" value="Ribosome-recycling factor"/>
    <property type="match status" value="1"/>
</dbReference>
<dbReference type="Gene3D" id="3.30.1360.40">
    <property type="match status" value="1"/>
</dbReference>
<dbReference type="Gene3D" id="1.10.132.20">
    <property type="entry name" value="Ribosome-recycling factor"/>
    <property type="match status" value="1"/>
</dbReference>
<dbReference type="HAMAP" id="MF_00040">
    <property type="entry name" value="RRF"/>
    <property type="match status" value="1"/>
</dbReference>
<dbReference type="InterPro" id="IPR002661">
    <property type="entry name" value="Ribosome_recyc_fac"/>
</dbReference>
<dbReference type="InterPro" id="IPR023584">
    <property type="entry name" value="Ribosome_recyc_fac_dom"/>
</dbReference>
<dbReference type="InterPro" id="IPR036191">
    <property type="entry name" value="RRF_sf"/>
</dbReference>
<dbReference type="NCBIfam" id="TIGR00496">
    <property type="entry name" value="frr"/>
    <property type="match status" value="1"/>
</dbReference>
<dbReference type="PANTHER" id="PTHR20982:SF3">
    <property type="entry name" value="MITOCHONDRIAL RIBOSOME RECYCLING FACTOR PSEUDO 1"/>
    <property type="match status" value="1"/>
</dbReference>
<dbReference type="PANTHER" id="PTHR20982">
    <property type="entry name" value="RIBOSOME RECYCLING FACTOR"/>
    <property type="match status" value="1"/>
</dbReference>
<dbReference type="Pfam" id="PF01765">
    <property type="entry name" value="RRF"/>
    <property type="match status" value="1"/>
</dbReference>
<dbReference type="SUPFAM" id="SSF55194">
    <property type="entry name" value="Ribosome recycling factor, RRF"/>
    <property type="match status" value="1"/>
</dbReference>
<reference key="1">
    <citation type="submission" date="2009-06" db="EMBL/GenBank/DDBJ databases">
        <title>Complete sequence of chromosome of Geopacillus sp. WCH70.</title>
        <authorList>
            <consortium name="US DOE Joint Genome Institute"/>
            <person name="Lucas S."/>
            <person name="Copeland A."/>
            <person name="Lapidus A."/>
            <person name="Glavina del Rio T."/>
            <person name="Dalin E."/>
            <person name="Tice H."/>
            <person name="Bruce D."/>
            <person name="Goodwin L."/>
            <person name="Pitluck S."/>
            <person name="Chertkov O."/>
            <person name="Brettin T."/>
            <person name="Detter J.C."/>
            <person name="Han C."/>
            <person name="Larimer F."/>
            <person name="Land M."/>
            <person name="Hauser L."/>
            <person name="Kyrpides N."/>
            <person name="Mikhailova N."/>
            <person name="Brumm P."/>
            <person name="Mead D.A."/>
            <person name="Richardson P."/>
        </authorList>
    </citation>
    <scope>NUCLEOTIDE SEQUENCE [LARGE SCALE GENOMIC DNA]</scope>
    <source>
        <strain>WCH70</strain>
    </source>
</reference>
<comment type="function">
    <text evidence="1">Responsible for the release of ribosomes from messenger RNA at the termination of protein biosynthesis. May increase the efficiency of translation by recycling ribosomes from one round of translation to another.</text>
</comment>
<comment type="subcellular location">
    <subcellularLocation>
        <location evidence="1">Cytoplasm</location>
    </subcellularLocation>
</comment>
<comment type="similarity">
    <text evidence="1">Belongs to the RRF family.</text>
</comment>
<accession>C5D9B8</accession>
<organism>
    <name type="scientific">Geobacillus sp. (strain WCH70)</name>
    <dbReference type="NCBI Taxonomy" id="471223"/>
    <lineage>
        <taxon>Bacteria</taxon>
        <taxon>Bacillati</taxon>
        <taxon>Bacillota</taxon>
        <taxon>Bacilli</taxon>
        <taxon>Bacillales</taxon>
        <taxon>Anoxybacillaceae</taxon>
        <taxon>Geobacillus</taxon>
    </lineage>
</organism>
<evidence type="ECO:0000255" key="1">
    <source>
        <dbReference type="HAMAP-Rule" id="MF_00040"/>
    </source>
</evidence>
<keyword id="KW-0963">Cytoplasm</keyword>
<keyword id="KW-0648">Protein biosynthesis</keyword>
<protein>
    <recommendedName>
        <fullName evidence="1">Ribosome-recycling factor</fullName>
        <shortName evidence="1">RRF</shortName>
    </recommendedName>
    <alternativeName>
        <fullName evidence="1">Ribosome-releasing factor</fullName>
    </alternativeName>
</protein>
<gene>
    <name evidence="1" type="primary">frr</name>
    <name type="ordered locus">GWCH70_1144</name>
</gene>
<feature type="chain" id="PRO_1000202100" description="Ribosome-recycling factor">
    <location>
        <begin position="1"/>
        <end position="185"/>
    </location>
</feature>